<organism>
    <name type="scientific">Pseudechis australis</name>
    <name type="common">Mulga snake</name>
    <name type="synonym">King brown snake</name>
    <dbReference type="NCBI Taxonomy" id="8670"/>
    <lineage>
        <taxon>Eukaryota</taxon>
        <taxon>Metazoa</taxon>
        <taxon>Chordata</taxon>
        <taxon>Craniata</taxon>
        <taxon>Vertebrata</taxon>
        <taxon>Euteleostomi</taxon>
        <taxon>Lepidosauria</taxon>
        <taxon>Squamata</taxon>
        <taxon>Bifurcata</taxon>
        <taxon>Unidentata</taxon>
        <taxon>Episquamata</taxon>
        <taxon>Toxicofera</taxon>
        <taxon>Serpentes</taxon>
        <taxon>Colubroidea</taxon>
        <taxon>Elapidae</taxon>
        <taxon>Hydrophiinae</taxon>
        <taxon>Pseudechis</taxon>
    </lineage>
</organism>
<protein>
    <recommendedName>
        <fullName>C-type lectin galactose-binding isoform</fullName>
        <shortName>CTL</shortName>
    </recommendedName>
    <alternativeName>
        <fullName>Venom C-type lectin galactose binding isoform</fullName>
    </alternativeName>
</protein>
<feature type="signal peptide" evidence="2">
    <location>
        <begin position="1"/>
        <end position="23"/>
    </location>
</feature>
<feature type="chain" id="PRO_0000422550" description="C-type lectin galactose-binding isoform">
    <location>
        <begin position="24"/>
        <end position="158"/>
    </location>
</feature>
<feature type="domain" description="C-type lectin" evidence="3">
    <location>
        <begin position="33"/>
        <end position="155"/>
    </location>
</feature>
<feature type="short sequence motif" description="Galactose-binding">
    <location>
        <begin position="119"/>
        <end position="121"/>
    </location>
</feature>
<feature type="binding site" evidence="1">
    <location>
        <position position="119"/>
    </location>
    <ligand>
        <name>Ca(2+)</name>
        <dbReference type="ChEBI" id="CHEBI:29108"/>
    </ligand>
</feature>
<feature type="binding site" evidence="1">
    <location>
        <position position="121"/>
    </location>
    <ligand>
        <name>Ca(2+)</name>
        <dbReference type="ChEBI" id="CHEBI:29108"/>
    </ligand>
</feature>
<feature type="binding site" evidence="1">
    <location>
        <position position="127"/>
    </location>
    <ligand>
        <name>Ca(2+)</name>
        <dbReference type="ChEBI" id="CHEBI:29108"/>
    </ligand>
</feature>
<feature type="binding site" evidence="1">
    <location>
        <position position="142"/>
    </location>
    <ligand>
        <name>Ca(2+)</name>
        <dbReference type="ChEBI" id="CHEBI:29108"/>
    </ligand>
</feature>
<feature type="binding site" evidence="1">
    <location>
        <position position="143"/>
    </location>
    <ligand>
        <name>Ca(2+)</name>
        <dbReference type="ChEBI" id="CHEBI:29108"/>
    </ligand>
</feature>
<feature type="glycosylation site" description="N-linked (GlcNAc...) asparagine" evidence="2">
    <location>
        <position position="134"/>
    </location>
</feature>
<feature type="disulfide bond" evidence="3">
    <location>
        <begin position="26"/>
        <end position="37"/>
    </location>
</feature>
<feature type="disulfide bond" evidence="3">
    <location>
        <begin position="54"/>
        <end position="154"/>
    </location>
</feature>
<feature type="disulfide bond" evidence="3">
    <location>
        <begin position="129"/>
        <end position="146"/>
    </location>
</feature>
<dbReference type="EMBL" id="EF194724">
    <property type="protein sequence ID" value="ABP94084.1"/>
    <property type="molecule type" value="mRNA"/>
</dbReference>
<dbReference type="SMR" id="D2YVI2"/>
<dbReference type="GO" id="GO:0005576">
    <property type="term" value="C:extracellular region"/>
    <property type="evidence" value="ECO:0007669"/>
    <property type="project" value="UniProtKB-SubCell"/>
</dbReference>
<dbReference type="GO" id="GO:0030246">
    <property type="term" value="F:carbohydrate binding"/>
    <property type="evidence" value="ECO:0007669"/>
    <property type="project" value="UniProtKB-KW"/>
</dbReference>
<dbReference type="GO" id="GO:0046872">
    <property type="term" value="F:metal ion binding"/>
    <property type="evidence" value="ECO:0007669"/>
    <property type="project" value="UniProtKB-KW"/>
</dbReference>
<dbReference type="CDD" id="cd03594">
    <property type="entry name" value="CLECT_REG-1_like"/>
    <property type="match status" value="1"/>
</dbReference>
<dbReference type="FunFam" id="3.10.100.10:FF:000015">
    <property type="entry name" value="C-type lectin Cal"/>
    <property type="match status" value="1"/>
</dbReference>
<dbReference type="Gene3D" id="3.10.100.10">
    <property type="entry name" value="Mannose-Binding Protein A, subunit A"/>
    <property type="match status" value="1"/>
</dbReference>
<dbReference type="InterPro" id="IPR001304">
    <property type="entry name" value="C-type_lectin-like"/>
</dbReference>
<dbReference type="InterPro" id="IPR016186">
    <property type="entry name" value="C-type_lectin-like/link_sf"/>
</dbReference>
<dbReference type="InterPro" id="IPR050111">
    <property type="entry name" value="C-type_lectin/snaclec_domain"/>
</dbReference>
<dbReference type="InterPro" id="IPR018378">
    <property type="entry name" value="C-type_lectin_CS"/>
</dbReference>
<dbReference type="InterPro" id="IPR016187">
    <property type="entry name" value="CTDL_fold"/>
</dbReference>
<dbReference type="PANTHER" id="PTHR22803">
    <property type="entry name" value="MANNOSE, PHOSPHOLIPASE, LECTIN RECEPTOR RELATED"/>
    <property type="match status" value="1"/>
</dbReference>
<dbReference type="Pfam" id="PF00059">
    <property type="entry name" value="Lectin_C"/>
    <property type="match status" value="1"/>
</dbReference>
<dbReference type="PRINTS" id="PR01504">
    <property type="entry name" value="PNCREATITSAP"/>
</dbReference>
<dbReference type="SMART" id="SM00034">
    <property type="entry name" value="CLECT"/>
    <property type="match status" value="1"/>
</dbReference>
<dbReference type="SUPFAM" id="SSF56436">
    <property type="entry name" value="C-type lectin-like"/>
    <property type="match status" value="1"/>
</dbReference>
<dbReference type="PROSITE" id="PS00615">
    <property type="entry name" value="C_TYPE_LECTIN_1"/>
    <property type="match status" value="1"/>
</dbReference>
<dbReference type="PROSITE" id="PS50041">
    <property type="entry name" value="C_TYPE_LECTIN_2"/>
    <property type="match status" value="1"/>
</dbReference>
<proteinExistence type="evidence at protein level"/>
<name>LECG_PSEAU</name>
<comment type="function">
    <text evidence="1">Galactose-binding lectin that binds to and agglutinates erythrocytes in a calcium-dependent manner.</text>
</comment>
<comment type="subunit">
    <text evidence="4">Dimer. Probably disulfide-linked homodimer.</text>
</comment>
<comment type="subcellular location">
    <subcellularLocation>
        <location evidence="1">Secreted</location>
    </subcellularLocation>
</comment>
<comment type="tissue specificity">
    <text>Expressed by the venom gland.</text>
</comment>
<comment type="similarity">
    <text evidence="5">Belongs to the true venom lectin family.</text>
</comment>
<sequence length="158" mass="18687">MGRFLLVTLSLLVMAFFLNGANSCCCPQDWLPRNGFCYKVFNDLKTWDDAEMYCRKFKPGCHLASLHSNADAVEFSEYITDYLTGQGHVWIGLRDTKKKYIWEWTDRSRTDFLPWRKDQPDHFNNEEFCVEIVNFTGYLQWNDDSCTALRPFLCQCKY</sequence>
<keyword id="KW-0106">Calcium</keyword>
<keyword id="KW-1015">Disulfide bond</keyword>
<keyword id="KW-0325">Glycoprotein</keyword>
<keyword id="KW-0348">Hemagglutinin</keyword>
<keyword id="KW-0430">Lectin</keyword>
<keyword id="KW-0479">Metal-binding</keyword>
<keyword id="KW-0964">Secreted</keyword>
<keyword id="KW-0732">Signal</keyword>
<evidence type="ECO:0000250" key="1"/>
<evidence type="ECO:0000255" key="2"/>
<evidence type="ECO:0000255" key="3">
    <source>
        <dbReference type="PROSITE-ProRule" id="PRU00040"/>
    </source>
</evidence>
<evidence type="ECO:0000269" key="4">
    <source>
    </source>
</evidence>
<evidence type="ECO:0000305" key="5"/>
<accession>D2YVI2</accession>
<reference key="1">
    <citation type="journal article" date="2011" name="Biochimie">
        <title>Characterisation of a mannose-binding C-type lectin from Oxyuranus scutellatus snake venom.</title>
        <authorList>
            <person name="Earl S.T."/>
            <person name="Robson J."/>
            <person name="Trabi M."/>
            <person name="de Jersey J."/>
            <person name="Masci P.P."/>
            <person name="Lavin M.F."/>
        </authorList>
    </citation>
    <scope>NUCLEOTIDE SEQUENCE [MRNA]</scope>
    <scope>SUBUNIT</scope>
    <source>
        <tissue>Venom</tissue>
        <tissue>Venom gland</tissue>
    </source>
</reference>